<reference key="1">
    <citation type="journal article" date="2001" name="Nature">
        <title>Complete genome sequence of a multiple drug resistant Salmonella enterica serovar Typhi CT18.</title>
        <authorList>
            <person name="Parkhill J."/>
            <person name="Dougan G."/>
            <person name="James K.D."/>
            <person name="Thomson N.R."/>
            <person name="Pickard D."/>
            <person name="Wain J."/>
            <person name="Churcher C.M."/>
            <person name="Mungall K.L."/>
            <person name="Bentley S.D."/>
            <person name="Holden M.T.G."/>
            <person name="Sebaihia M."/>
            <person name="Baker S."/>
            <person name="Basham D."/>
            <person name="Brooks K."/>
            <person name="Chillingworth T."/>
            <person name="Connerton P."/>
            <person name="Cronin A."/>
            <person name="Davis P."/>
            <person name="Davies R.M."/>
            <person name="Dowd L."/>
            <person name="White N."/>
            <person name="Farrar J."/>
            <person name="Feltwell T."/>
            <person name="Hamlin N."/>
            <person name="Haque A."/>
            <person name="Hien T.T."/>
            <person name="Holroyd S."/>
            <person name="Jagels K."/>
            <person name="Krogh A."/>
            <person name="Larsen T.S."/>
            <person name="Leather S."/>
            <person name="Moule S."/>
            <person name="O'Gaora P."/>
            <person name="Parry C."/>
            <person name="Quail M.A."/>
            <person name="Rutherford K.M."/>
            <person name="Simmonds M."/>
            <person name="Skelton J."/>
            <person name="Stevens K."/>
            <person name="Whitehead S."/>
            <person name="Barrell B.G."/>
        </authorList>
    </citation>
    <scope>NUCLEOTIDE SEQUENCE [LARGE SCALE GENOMIC DNA]</scope>
    <source>
        <strain>CT18</strain>
    </source>
</reference>
<reference key="2">
    <citation type="journal article" date="2003" name="J. Bacteriol.">
        <title>Comparative genomics of Salmonella enterica serovar Typhi strains Ty2 and CT18.</title>
        <authorList>
            <person name="Deng W."/>
            <person name="Liou S.-R."/>
            <person name="Plunkett G. III"/>
            <person name="Mayhew G.F."/>
            <person name="Rose D.J."/>
            <person name="Burland V."/>
            <person name="Kodoyianni V."/>
            <person name="Schwartz D.C."/>
            <person name="Blattner F.R."/>
        </authorList>
    </citation>
    <scope>NUCLEOTIDE SEQUENCE [LARGE SCALE GENOMIC DNA]</scope>
    <source>
        <strain>ATCC 700931 / Ty2</strain>
    </source>
</reference>
<organism>
    <name type="scientific">Salmonella typhi</name>
    <dbReference type="NCBI Taxonomy" id="90370"/>
    <lineage>
        <taxon>Bacteria</taxon>
        <taxon>Pseudomonadati</taxon>
        <taxon>Pseudomonadota</taxon>
        <taxon>Gammaproteobacteria</taxon>
        <taxon>Enterobacterales</taxon>
        <taxon>Enterobacteriaceae</taxon>
        <taxon>Salmonella</taxon>
    </lineage>
</organism>
<keyword id="KW-0240">DNA-directed RNA polymerase</keyword>
<keyword id="KW-0548">Nucleotidyltransferase</keyword>
<keyword id="KW-0804">Transcription</keyword>
<keyword id="KW-0808">Transferase</keyword>
<evidence type="ECO:0000255" key="1">
    <source>
        <dbReference type="HAMAP-Rule" id="MF_01321"/>
    </source>
</evidence>
<evidence type="ECO:0000305" key="2"/>
<feature type="chain" id="PRO_0000047952" description="DNA-directed RNA polymerase subunit beta">
    <location>
        <begin position="1"/>
        <end position="1342"/>
    </location>
</feature>
<feature type="sequence conflict" description="In Ref. 2; AAO70990." evidence="2" ref="2">
    <original>F</original>
    <variation>S</variation>
    <location>
        <position position="917"/>
    </location>
</feature>
<sequence length="1342" mass="150631">MVYSYTEKKRIRKDFGKRPQVLDVPYLLSIQLDSFQKFIEQDPEGQYGLEAAFRSVFPIQSYSGNSELQYVSYRLGEPVFDVQECQIRGVTYSAPLRVKLRLVIYEREAPEGTVKDIKEQEVYMGEIPLMTDNGTFVINGTERVIVSQLHRSPGVFFDSDKGKTHSSGKVLYNARIIPYRGSWLDFEFDPKDNLFVRIDRRRKLPATIILRALNYTTEQILDLFFEKVVFEIRDNKLQMELIPERLRGETASFDIEANGKVYVEKGRRITARHIRQLEKDDIKHIEVPVEYIAGKVVSKDYVDESTGELICAANMELSLDLLAKLSQSGHKRIETLFTNDLDHGPYISETVRVDPTNDRLSALVEIYRMMRPGEPPTREAAESLFENLFFSEDRYDLSAVGRMKFNRSLLRDEIEGSGILSKDDIIDVMKKLIDIRNGKGEVDDIDHLGNRRIRSVGEMAENQFRVGLVRVERAVKERLSLGDLDTLMPQDMINAKPISAAVKEFFGSSQLSQFMDQNNPLSEITHKRRISALGPGGLTRERAGFEVRDVHPTHYGRVCPIETPEGPNIGLINSLSVYAQTNEYGFLETPYRRVVDGVVTDEIHYLSAIEEGNYVIAQANSNLDDEGHFVEDLVTCRSKGESSLFSRDQVDYMDVSTQQVVSVGASLIPFLEHDDANRALMGANMQRQAVPTLRADKPLVGTGMERAVAVDSGVTAVAKRGGTVQYVDASRIVIKVNEDEMYPGEAGIDIYNLTKYTRSNQNTCINQMPCVSLGEPVERGDVLADGPSTDLGELALGQNMRVAFMPWNGYNFEDSILVSERVVQEDRFTTIHIQELACVSRDTKLGPEEITADIPNVGEAALSKLDESGIVYIGAEVTGGDILVGKVTPKGETQLTPEEKLLRAIFGEKASDVKDSFLRVPNGVSGTVIDVQVFTRDGVEKDKRALEIEEMQLKQAKKDLSEELQILEAGLFSRIRAVLVSGGVEAEKLDKLPRDRWLELGLTDEEKQNQLEQLAEQYDELKHEFEKKLEAKRRKITQGDDLAPGVLKIVKVYLAVKRRIQPGDKMAGRHGNKGVISKINPIEDMPYDENGTPVDIVLNPLGVPSRMNIGQILETHLGMAAKGIGDKINAMLKQQQEVAKLREFIQRAYDLGADVRQKVDLSTFSDDEVLRLAENLRKGMPIATPVFDGAKEAEIKELLKLGDLPTSGQITLFDGRTGEQFERPVTVGYMYMLKLNHLVDDKMHARSTGSYSLVTQQPLGGKAQFGGQRFGEMEVWALEAYGAAYTLQEMLTVKSDDVNGRTKMYKNIVDGNHQMEPGMPESFNVLLKEIRSLGINIELEDE</sequence>
<dbReference type="EC" id="2.7.7.6" evidence="1"/>
<dbReference type="EMBL" id="AL513382">
    <property type="protein sequence ID" value="CAD09487.1"/>
    <property type="molecule type" value="Genomic_DNA"/>
</dbReference>
<dbReference type="EMBL" id="AE014613">
    <property type="protein sequence ID" value="AAO70990.1"/>
    <property type="molecule type" value="Genomic_DNA"/>
</dbReference>
<dbReference type="RefSeq" id="NP_457917.1">
    <property type="nucleotide sequence ID" value="NC_003198.1"/>
</dbReference>
<dbReference type="SMR" id="Q8Z320"/>
<dbReference type="STRING" id="220341.gene:17587588"/>
<dbReference type="KEGG" id="stt:t3474"/>
<dbReference type="KEGG" id="sty:STY3732"/>
<dbReference type="PATRIC" id="fig|220341.7.peg.3805"/>
<dbReference type="eggNOG" id="COG0085">
    <property type="taxonomic scope" value="Bacteria"/>
</dbReference>
<dbReference type="HOGENOM" id="CLU_000524_4_0_6"/>
<dbReference type="OMA" id="FMTWEGY"/>
<dbReference type="Proteomes" id="UP000000541">
    <property type="component" value="Chromosome"/>
</dbReference>
<dbReference type="Proteomes" id="UP000002670">
    <property type="component" value="Chromosome"/>
</dbReference>
<dbReference type="GO" id="GO:0000428">
    <property type="term" value="C:DNA-directed RNA polymerase complex"/>
    <property type="evidence" value="ECO:0007669"/>
    <property type="project" value="UniProtKB-KW"/>
</dbReference>
<dbReference type="GO" id="GO:0003677">
    <property type="term" value="F:DNA binding"/>
    <property type="evidence" value="ECO:0007669"/>
    <property type="project" value="UniProtKB-UniRule"/>
</dbReference>
<dbReference type="GO" id="GO:0003899">
    <property type="term" value="F:DNA-directed RNA polymerase activity"/>
    <property type="evidence" value="ECO:0007669"/>
    <property type="project" value="UniProtKB-UniRule"/>
</dbReference>
<dbReference type="GO" id="GO:0032549">
    <property type="term" value="F:ribonucleoside binding"/>
    <property type="evidence" value="ECO:0007669"/>
    <property type="project" value="InterPro"/>
</dbReference>
<dbReference type="GO" id="GO:0006351">
    <property type="term" value="P:DNA-templated transcription"/>
    <property type="evidence" value="ECO:0007669"/>
    <property type="project" value="UniProtKB-UniRule"/>
</dbReference>
<dbReference type="CDD" id="cd00653">
    <property type="entry name" value="RNA_pol_B_RPB2"/>
    <property type="match status" value="1"/>
</dbReference>
<dbReference type="FunFam" id="2.30.150.10:FF:000001">
    <property type="entry name" value="DNA-directed RNA polymerase subunit beta"/>
    <property type="match status" value="1"/>
</dbReference>
<dbReference type="FunFam" id="2.40.270.10:FF:000003">
    <property type="entry name" value="DNA-directed RNA polymerase subunit beta"/>
    <property type="match status" value="1"/>
</dbReference>
<dbReference type="FunFam" id="2.40.270.10:FF:000004">
    <property type="entry name" value="DNA-directed RNA polymerase subunit beta"/>
    <property type="match status" value="1"/>
</dbReference>
<dbReference type="FunFam" id="2.40.50.100:FF:000006">
    <property type="entry name" value="DNA-directed RNA polymerase subunit beta"/>
    <property type="match status" value="1"/>
</dbReference>
<dbReference type="FunFam" id="2.40.50.150:FF:000001">
    <property type="entry name" value="DNA-directed RNA polymerase subunit beta"/>
    <property type="match status" value="1"/>
</dbReference>
<dbReference type="FunFam" id="3.90.1100.10:FF:000002">
    <property type="entry name" value="DNA-directed RNA polymerase subunit beta"/>
    <property type="match status" value="1"/>
</dbReference>
<dbReference type="FunFam" id="3.90.1110.10:FF:000001">
    <property type="entry name" value="DNA-directed RNA polymerase subunit beta"/>
    <property type="match status" value="1"/>
</dbReference>
<dbReference type="FunFam" id="3.90.1110.10:FF:000004">
    <property type="entry name" value="DNA-directed RNA polymerase subunit beta"/>
    <property type="match status" value="1"/>
</dbReference>
<dbReference type="FunFam" id="3.90.1800.10:FF:000001">
    <property type="entry name" value="DNA-directed RNA polymerase subunit beta"/>
    <property type="match status" value="1"/>
</dbReference>
<dbReference type="Gene3D" id="2.40.50.100">
    <property type="match status" value="1"/>
</dbReference>
<dbReference type="Gene3D" id="2.40.50.150">
    <property type="match status" value="1"/>
</dbReference>
<dbReference type="Gene3D" id="3.90.1100.10">
    <property type="match status" value="2"/>
</dbReference>
<dbReference type="Gene3D" id="2.30.150.10">
    <property type="entry name" value="DNA-directed RNA polymerase, beta subunit, external 1 domain"/>
    <property type="match status" value="1"/>
</dbReference>
<dbReference type="Gene3D" id="2.40.270.10">
    <property type="entry name" value="DNA-directed RNA polymerase, subunit 2, domain 6"/>
    <property type="match status" value="2"/>
</dbReference>
<dbReference type="Gene3D" id="3.90.1800.10">
    <property type="entry name" value="RNA polymerase alpha subunit dimerisation domain"/>
    <property type="match status" value="1"/>
</dbReference>
<dbReference type="Gene3D" id="3.90.1110.10">
    <property type="entry name" value="RNA polymerase Rpb2, domain 2"/>
    <property type="match status" value="2"/>
</dbReference>
<dbReference type="HAMAP" id="MF_01321">
    <property type="entry name" value="RNApol_bact_RpoB"/>
    <property type="match status" value="1"/>
</dbReference>
<dbReference type="InterPro" id="IPR042107">
    <property type="entry name" value="DNA-dir_RNA_pol_bsu_ext_1_sf"/>
</dbReference>
<dbReference type="InterPro" id="IPR019462">
    <property type="entry name" value="DNA-dir_RNA_pol_bsu_external_1"/>
</dbReference>
<dbReference type="InterPro" id="IPR015712">
    <property type="entry name" value="DNA-dir_RNA_pol_su2"/>
</dbReference>
<dbReference type="InterPro" id="IPR007120">
    <property type="entry name" value="DNA-dir_RNAP_su2_dom"/>
</dbReference>
<dbReference type="InterPro" id="IPR037033">
    <property type="entry name" value="DNA-dir_RNAP_su2_hyb_sf"/>
</dbReference>
<dbReference type="InterPro" id="IPR010243">
    <property type="entry name" value="RNA_pol_bsu_bac"/>
</dbReference>
<dbReference type="InterPro" id="IPR007121">
    <property type="entry name" value="RNA_pol_bsu_CS"/>
</dbReference>
<dbReference type="InterPro" id="IPR007644">
    <property type="entry name" value="RNA_pol_bsu_protrusion"/>
</dbReference>
<dbReference type="InterPro" id="IPR007642">
    <property type="entry name" value="RNA_pol_Rpb2_2"/>
</dbReference>
<dbReference type="InterPro" id="IPR037034">
    <property type="entry name" value="RNA_pol_Rpb2_2_sf"/>
</dbReference>
<dbReference type="InterPro" id="IPR007645">
    <property type="entry name" value="RNA_pol_Rpb2_3"/>
</dbReference>
<dbReference type="InterPro" id="IPR007641">
    <property type="entry name" value="RNA_pol_Rpb2_7"/>
</dbReference>
<dbReference type="InterPro" id="IPR014724">
    <property type="entry name" value="RNA_pol_RPB2_OB-fold"/>
</dbReference>
<dbReference type="NCBIfam" id="NF001616">
    <property type="entry name" value="PRK00405.1"/>
    <property type="match status" value="1"/>
</dbReference>
<dbReference type="NCBIfam" id="TIGR02013">
    <property type="entry name" value="rpoB"/>
    <property type="match status" value="1"/>
</dbReference>
<dbReference type="PANTHER" id="PTHR20856">
    <property type="entry name" value="DNA-DIRECTED RNA POLYMERASE I SUBUNIT 2"/>
    <property type="match status" value="1"/>
</dbReference>
<dbReference type="Pfam" id="PF04563">
    <property type="entry name" value="RNA_pol_Rpb2_1"/>
    <property type="match status" value="1"/>
</dbReference>
<dbReference type="Pfam" id="PF04561">
    <property type="entry name" value="RNA_pol_Rpb2_2"/>
    <property type="match status" value="2"/>
</dbReference>
<dbReference type="Pfam" id="PF04565">
    <property type="entry name" value="RNA_pol_Rpb2_3"/>
    <property type="match status" value="1"/>
</dbReference>
<dbReference type="Pfam" id="PF10385">
    <property type="entry name" value="RNA_pol_Rpb2_45"/>
    <property type="match status" value="1"/>
</dbReference>
<dbReference type="Pfam" id="PF00562">
    <property type="entry name" value="RNA_pol_Rpb2_6"/>
    <property type="match status" value="1"/>
</dbReference>
<dbReference type="Pfam" id="PF04560">
    <property type="entry name" value="RNA_pol_Rpb2_7"/>
    <property type="match status" value="1"/>
</dbReference>
<dbReference type="SUPFAM" id="SSF64484">
    <property type="entry name" value="beta and beta-prime subunits of DNA dependent RNA-polymerase"/>
    <property type="match status" value="1"/>
</dbReference>
<dbReference type="PROSITE" id="PS01166">
    <property type="entry name" value="RNA_POL_BETA"/>
    <property type="match status" value="1"/>
</dbReference>
<accession>Q8Z320</accession>
<accession>Q83SU9</accession>
<gene>
    <name evidence="1" type="primary">rpoB</name>
    <name type="ordered locus">STY3732</name>
    <name type="ordered locus">t3474</name>
</gene>
<name>RPOB_SALTI</name>
<comment type="function">
    <text evidence="1">DNA-dependent RNA polymerase catalyzes the transcription of DNA into RNA using the four ribonucleoside triphosphates as substrates.</text>
</comment>
<comment type="catalytic activity">
    <reaction evidence="1">
        <text>RNA(n) + a ribonucleoside 5'-triphosphate = RNA(n+1) + diphosphate</text>
        <dbReference type="Rhea" id="RHEA:21248"/>
        <dbReference type="Rhea" id="RHEA-COMP:14527"/>
        <dbReference type="Rhea" id="RHEA-COMP:17342"/>
        <dbReference type="ChEBI" id="CHEBI:33019"/>
        <dbReference type="ChEBI" id="CHEBI:61557"/>
        <dbReference type="ChEBI" id="CHEBI:140395"/>
        <dbReference type="EC" id="2.7.7.6"/>
    </reaction>
</comment>
<comment type="subunit">
    <text evidence="1">The RNAP catalytic core consists of 2 alpha, 1 beta, 1 beta' and 1 omega subunit. When a sigma factor is associated with the core the holoenzyme is formed, which can initiate transcription.</text>
</comment>
<comment type="similarity">
    <text evidence="1">Belongs to the RNA polymerase beta chain family.</text>
</comment>
<protein>
    <recommendedName>
        <fullName evidence="1">DNA-directed RNA polymerase subunit beta</fullName>
        <shortName evidence="1">RNAP subunit beta</shortName>
        <ecNumber evidence="1">2.7.7.6</ecNumber>
    </recommendedName>
    <alternativeName>
        <fullName evidence="1">RNA polymerase subunit beta</fullName>
    </alternativeName>
    <alternativeName>
        <fullName evidence="1">Transcriptase subunit beta</fullName>
    </alternativeName>
</protein>
<proteinExistence type="inferred from homology"/>